<organism>
    <name type="scientific">Rhodococcus opacus (strain B4)</name>
    <dbReference type="NCBI Taxonomy" id="632772"/>
    <lineage>
        <taxon>Bacteria</taxon>
        <taxon>Bacillati</taxon>
        <taxon>Actinomycetota</taxon>
        <taxon>Actinomycetes</taxon>
        <taxon>Mycobacteriales</taxon>
        <taxon>Nocardiaceae</taxon>
        <taxon>Rhodococcus</taxon>
    </lineage>
</organism>
<protein>
    <recommendedName>
        <fullName evidence="1">NADH-quinone oxidoreductase subunit K</fullName>
        <ecNumber evidence="1">7.1.1.-</ecNumber>
    </recommendedName>
    <alternativeName>
        <fullName evidence="1">NADH dehydrogenase I subunit K</fullName>
    </alternativeName>
    <alternativeName>
        <fullName evidence="1">NDH-1 subunit K</fullName>
    </alternativeName>
</protein>
<proteinExistence type="inferred from homology"/>
<reference key="1">
    <citation type="submission" date="2009-03" db="EMBL/GenBank/DDBJ databases">
        <title>Comparison of the complete genome sequences of Rhodococcus erythropolis PR4 and Rhodococcus opacus B4.</title>
        <authorList>
            <person name="Takarada H."/>
            <person name="Sekine M."/>
            <person name="Hosoyama A."/>
            <person name="Yamada R."/>
            <person name="Fujisawa T."/>
            <person name="Omata S."/>
            <person name="Shimizu A."/>
            <person name="Tsukatani N."/>
            <person name="Tanikawa S."/>
            <person name="Fujita N."/>
            <person name="Harayama S."/>
        </authorList>
    </citation>
    <scope>NUCLEOTIDE SEQUENCE [LARGE SCALE GENOMIC DNA]</scope>
    <source>
        <strain>B4</strain>
    </source>
</reference>
<evidence type="ECO:0000255" key="1">
    <source>
        <dbReference type="HAMAP-Rule" id="MF_01456"/>
    </source>
</evidence>
<dbReference type="EC" id="7.1.1.-" evidence="1"/>
<dbReference type="EMBL" id="AP011115">
    <property type="protein sequence ID" value="BAH54228.1"/>
    <property type="molecule type" value="Genomic_DNA"/>
</dbReference>
<dbReference type="RefSeq" id="WP_005239116.1">
    <property type="nucleotide sequence ID" value="NC_012522.1"/>
</dbReference>
<dbReference type="SMR" id="C1AZF7"/>
<dbReference type="STRING" id="632772.ROP_59810"/>
<dbReference type="GeneID" id="69890299"/>
<dbReference type="KEGG" id="rop:ROP_59810"/>
<dbReference type="PATRIC" id="fig|632772.20.peg.6247"/>
<dbReference type="HOGENOM" id="CLU_144724_0_0_11"/>
<dbReference type="OrthoDB" id="9810120at2"/>
<dbReference type="Proteomes" id="UP000002212">
    <property type="component" value="Chromosome"/>
</dbReference>
<dbReference type="GO" id="GO:0030964">
    <property type="term" value="C:NADH dehydrogenase complex"/>
    <property type="evidence" value="ECO:0007669"/>
    <property type="project" value="TreeGrafter"/>
</dbReference>
<dbReference type="GO" id="GO:0005886">
    <property type="term" value="C:plasma membrane"/>
    <property type="evidence" value="ECO:0007669"/>
    <property type="project" value="UniProtKB-SubCell"/>
</dbReference>
<dbReference type="GO" id="GO:0050136">
    <property type="term" value="F:NADH:ubiquinone reductase (non-electrogenic) activity"/>
    <property type="evidence" value="ECO:0007669"/>
    <property type="project" value="UniProtKB-UniRule"/>
</dbReference>
<dbReference type="GO" id="GO:0048038">
    <property type="term" value="F:quinone binding"/>
    <property type="evidence" value="ECO:0007669"/>
    <property type="project" value="UniProtKB-KW"/>
</dbReference>
<dbReference type="GO" id="GO:0042773">
    <property type="term" value="P:ATP synthesis coupled electron transport"/>
    <property type="evidence" value="ECO:0007669"/>
    <property type="project" value="InterPro"/>
</dbReference>
<dbReference type="FunFam" id="1.10.287.3510:FF:000001">
    <property type="entry name" value="NADH-quinone oxidoreductase subunit K"/>
    <property type="match status" value="1"/>
</dbReference>
<dbReference type="Gene3D" id="1.10.287.3510">
    <property type="match status" value="1"/>
</dbReference>
<dbReference type="HAMAP" id="MF_01456">
    <property type="entry name" value="NDH1_NuoK"/>
    <property type="match status" value="1"/>
</dbReference>
<dbReference type="InterPro" id="IPR001133">
    <property type="entry name" value="NADH_UbQ_OxRdtase_chain4L/K"/>
</dbReference>
<dbReference type="InterPro" id="IPR039428">
    <property type="entry name" value="NUOK/Mnh_C1-like"/>
</dbReference>
<dbReference type="NCBIfam" id="NF004320">
    <property type="entry name" value="PRK05715.1-2"/>
    <property type="match status" value="1"/>
</dbReference>
<dbReference type="NCBIfam" id="NF004321">
    <property type="entry name" value="PRK05715.1-3"/>
    <property type="match status" value="1"/>
</dbReference>
<dbReference type="NCBIfam" id="NF004323">
    <property type="entry name" value="PRK05715.1-5"/>
    <property type="match status" value="1"/>
</dbReference>
<dbReference type="PANTHER" id="PTHR11434:SF21">
    <property type="entry name" value="NADH DEHYDROGENASE SUBUNIT 4L-RELATED"/>
    <property type="match status" value="1"/>
</dbReference>
<dbReference type="PANTHER" id="PTHR11434">
    <property type="entry name" value="NADH-UBIQUINONE OXIDOREDUCTASE SUBUNIT ND4L"/>
    <property type="match status" value="1"/>
</dbReference>
<dbReference type="Pfam" id="PF00420">
    <property type="entry name" value="Oxidored_q2"/>
    <property type="match status" value="1"/>
</dbReference>
<sequence>MNPENYLYLSALLFTIGAAGVLIRRNAIIVFMCIELMLNASNLAFVTFARMHGNLDGQVFAFFTMVVAAAEVVVGLAIIMTIFRSRRSASVDDANLLKN</sequence>
<comment type="function">
    <text evidence="1">NDH-1 shuttles electrons from NADH, via FMN and iron-sulfur (Fe-S) centers, to quinones in the respiratory chain. The immediate electron acceptor for the enzyme in this species is believed to be a menaquinone. Couples the redox reaction to proton translocation (for every two electrons transferred, four hydrogen ions are translocated across the cytoplasmic membrane), and thus conserves the redox energy in a proton gradient.</text>
</comment>
<comment type="catalytic activity">
    <reaction evidence="1">
        <text>a quinone + NADH + 5 H(+)(in) = a quinol + NAD(+) + 4 H(+)(out)</text>
        <dbReference type="Rhea" id="RHEA:57888"/>
        <dbReference type="ChEBI" id="CHEBI:15378"/>
        <dbReference type="ChEBI" id="CHEBI:24646"/>
        <dbReference type="ChEBI" id="CHEBI:57540"/>
        <dbReference type="ChEBI" id="CHEBI:57945"/>
        <dbReference type="ChEBI" id="CHEBI:132124"/>
    </reaction>
</comment>
<comment type="subunit">
    <text evidence="1">NDH-1 is composed of 14 different subunits. Subunits NuoA, H, J, K, L, M, N constitute the membrane sector of the complex.</text>
</comment>
<comment type="subcellular location">
    <subcellularLocation>
        <location evidence="1">Cell membrane</location>
        <topology evidence="1">Multi-pass membrane protein</topology>
    </subcellularLocation>
</comment>
<comment type="similarity">
    <text evidence="1">Belongs to the complex I subunit 4L family.</text>
</comment>
<feature type="chain" id="PRO_0000390204" description="NADH-quinone oxidoreductase subunit K">
    <location>
        <begin position="1"/>
        <end position="99"/>
    </location>
</feature>
<feature type="transmembrane region" description="Helical" evidence="1">
    <location>
        <begin position="3"/>
        <end position="23"/>
    </location>
</feature>
<feature type="transmembrane region" description="Helical" evidence="1">
    <location>
        <begin position="28"/>
        <end position="48"/>
    </location>
</feature>
<feature type="transmembrane region" description="Helical" evidence="1">
    <location>
        <begin position="59"/>
        <end position="79"/>
    </location>
</feature>
<accession>C1AZF7</accession>
<name>NUOK_RHOOB</name>
<keyword id="KW-1003">Cell membrane</keyword>
<keyword id="KW-0472">Membrane</keyword>
<keyword id="KW-0520">NAD</keyword>
<keyword id="KW-0874">Quinone</keyword>
<keyword id="KW-1278">Translocase</keyword>
<keyword id="KW-0812">Transmembrane</keyword>
<keyword id="KW-1133">Transmembrane helix</keyword>
<keyword id="KW-0813">Transport</keyword>
<gene>
    <name evidence="1" type="primary">nuoK</name>
    <name type="ordered locus">ROP_59810</name>
</gene>